<reference key="1">
    <citation type="journal article" date="2012" name="PLoS ONE">
        <title>Identification and phylogenetic analysis of Tityus pachyurus and Tityus obscurus novel putative Na+-channel scorpion toxins.</title>
        <authorList>
            <person name="Guerrero-Vargas J.A."/>
            <person name="Mourao C.B."/>
            <person name="Quintero-Hernandez V."/>
            <person name="Possani L.D."/>
            <person name="Schwartz E.F."/>
        </authorList>
    </citation>
    <scope>NUCLEOTIDE SEQUENCE [MRNA]</scope>
    <scope>NOMENCLATURE</scope>
    <source>
        <tissue>Venom gland</tissue>
    </source>
</reference>
<keyword id="KW-0027">Amidation</keyword>
<keyword id="KW-1015">Disulfide bond</keyword>
<keyword id="KW-0872">Ion channel impairing toxin</keyword>
<keyword id="KW-0528">Neurotoxin</keyword>
<keyword id="KW-0964">Secreted</keyword>
<keyword id="KW-0732">Signal</keyword>
<keyword id="KW-0800">Toxin</keyword>
<keyword id="KW-0738">Voltage-gated sodium channel impairing toxin</keyword>
<organism>
    <name type="scientific">Tityus obscurus</name>
    <name type="common">Amazonian scorpion</name>
    <name type="synonym">Tityus cambridgei</name>
    <dbReference type="NCBI Taxonomy" id="1221240"/>
    <lineage>
        <taxon>Eukaryota</taxon>
        <taxon>Metazoa</taxon>
        <taxon>Ecdysozoa</taxon>
        <taxon>Arthropoda</taxon>
        <taxon>Chelicerata</taxon>
        <taxon>Arachnida</taxon>
        <taxon>Scorpiones</taxon>
        <taxon>Buthida</taxon>
        <taxon>Buthoidea</taxon>
        <taxon>Buthidae</taxon>
        <taxon>Tityus</taxon>
    </lineage>
</organism>
<comment type="function">
    <text evidence="1">Alpha toxins bind voltage-independently at site-3 of sodium channels (Nav) and inhibit the inactivation of the activated channels, thereby blocking neuronal transmission.</text>
</comment>
<comment type="subcellular location">
    <subcellularLocation>
        <location evidence="1">Secreted</location>
    </subcellularLocation>
</comment>
<comment type="tissue specificity">
    <text>Expressed by the venom gland.</text>
</comment>
<comment type="domain">
    <text evidence="4">Has the structural arrangement of an alpha-helix connected to antiparallel beta-sheets by disulfide bonds (CS-alpha/beta).</text>
</comment>
<comment type="similarity">
    <text evidence="4">Belongs to the long (4 C-C) scorpion toxin superfamily. Sodium channel inhibitor family. Alpha subfamily.</text>
</comment>
<feature type="signal peptide" evidence="2">
    <location>
        <begin position="1"/>
        <end position="19"/>
    </location>
</feature>
<feature type="chain" id="PRO_5000851430" description="Toxin To9">
    <location>
        <begin position="20"/>
        <end position="82"/>
    </location>
</feature>
<feature type="domain" description="LCN-type CS-alpha/beta" evidence="3">
    <location>
        <begin position="21"/>
        <end position="81"/>
    </location>
</feature>
<feature type="modified residue" description="Proline amide" evidence="1">
    <location>
        <position position="82"/>
    </location>
</feature>
<feature type="disulfide bond" evidence="3">
    <location>
        <begin position="31"/>
        <end position="80"/>
    </location>
</feature>
<feature type="disulfide bond" evidence="3">
    <location>
        <begin position="35"/>
        <end position="56"/>
    </location>
</feature>
<feature type="disulfide bond" evidence="3">
    <location>
        <begin position="42"/>
        <end position="63"/>
    </location>
</feature>
<feature type="disulfide bond" evidence="3">
    <location>
        <begin position="46"/>
        <end position="65"/>
    </location>
</feature>
<evidence type="ECO:0000250" key="1"/>
<evidence type="ECO:0000255" key="2"/>
<evidence type="ECO:0000255" key="3">
    <source>
        <dbReference type="PROSITE-ProRule" id="PRU01210"/>
    </source>
</evidence>
<evidence type="ECO:0000305" key="4"/>
<proteinExistence type="evidence at transcript level"/>
<sequence>MNYSTLIAVASLLTAGTESKKDGYPVKEGDCAFPCGYDNEYCDKLCKERKADSGYCYWGNILCYCYGLPDKAAIKGYGRCRPGKK</sequence>
<protein>
    <recommendedName>
        <fullName>Toxin To9</fullName>
    </recommendedName>
    <alternativeName>
        <fullName>T-alpha* NaTx3.8</fullName>
    </alternativeName>
</protein>
<name>SCX9_TITOB</name>
<dbReference type="EMBL" id="HE585232">
    <property type="protein sequence ID" value="CCD31426.1"/>
    <property type="molecule type" value="mRNA"/>
</dbReference>
<dbReference type="SMR" id="H1ZZH8"/>
<dbReference type="GO" id="GO:0005576">
    <property type="term" value="C:extracellular region"/>
    <property type="evidence" value="ECO:0007669"/>
    <property type="project" value="UniProtKB-SubCell"/>
</dbReference>
<dbReference type="GO" id="GO:0019871">
    <property type="term" value="F:sodium channel inhibitor activity"/>
    <property type="evidence" value="ECO:0007669"/>
    <property type="project" value="InterPro"/>
</dbReference>
<dbReference type="GO" id="GO:0090729">
    <property type="term" value="F:toxin activity"/>
    <property type="evidence" value="ECO:0007669"/>
    <property type="project" value="UniProtKB-KW"/>
</dbReference>
<dbReference type="GO" id="GO:0006952">
    <property type="term" value="P:defense response"/>
    <property type="evidence" value="ECO:0007669"/>
    <property type="project" value="InterPro"/>
</dbReference>
<dbReference type="CDD" id="cd23106">
    <property type="entry name" value="neurotoxins_LC_scorpion"/>
    <property type="match status" value="1"/>
</dbReference>
<dbReference type="Gene3D" id="3.30.30.10">
    <property type="entry name" value="Knottin, scorpion toxin-like"/>
    <property type="match status" value="1"/>
</dbReference>
<dbReference type="InterPro" id="IPR044062">
    <property type="entry name" value="LCN-type_CS_alpha_beta_dom"/>
</dbReference>
<dbReference type="InterPro" id="IPR003614">
    <property type="entry name" value="Scorpion_toxin-like"/>
</dbReference>
<dbReference type="InterPro" id="IPR036574">
    <property type="entry name" value="Scorpion_toxin-like_sf"/>
</dbReference>
<dbReference type="InterPro" id="IPR018218">
    <property type="entry name" value="Scorpion_toxinL"/>
</dbReference>
<dbReference type="InterPro" id="IPR002061">
    <property type="entry name" value="Scorpion_toxinL/defensin"/>
</dbReference>
<dbReference type="Pfam" id="PF00537">
    <property type="entry name" value="Toxin_3"/>
    <property type="match status" value="1"/>
</dbReference>
<dbReference type="PRINTS" id="PR00285">
    <property type="entry name" value="SCORPNTOXIN"/>
</dbReference>
<dbReference type="SMART" id="SM00505">
    <property type="entry name" value="Knot1"/>
    <property type="match status" value="1"/>
</dbReference>
<dbReference type="SUPFAM" id="SSF57095">
    <property type="entry name" value="Scorpion toxin-like"/>
    <property type="match status" value="1"/>
</dbReference>
<dbReference type="PROSITE" id="PS51863">
    <property type="entry name" value="LCN_CSAB"/>
    <property type="match status" value="1"/>
</dbReference>
<accession>H1ZZH8</accession>